<sequence>MKLFYLLVICALSLAVMADEKPKLILPTPAPPNLPQLVGGGGGNRKDGFGVSVDAHQKVWTSDNGRHSIGVTPGYSQHLGGPYGNSRPDYRIGAGYSYNFG</sequence>
<feature type="signal peptide" evidence="2">
    <location>
        <begin position="1"/>
        <end position="18"/>
    </location>
</feature>
<feature type="chain" id="PRO_0000004907" description="Diptericin-D">
    <location>
        <begin position="19"/>
        <end position="100"/>
    </location>
</feature>
<feature type="modified residue" description="Phenylalanine amide" evidence="2">
    <location>
        <position position="100"/>
    </location>
</feature>
<feature type="glycosylation site" id="CAR_000126" description="O-linked (GalNAc...) threonine" evidence="2 3">
    <location>
        <position position="28"/>
    </location>
</feature>
<feature type="glycosylation site" id="CAR_000127" description="O-linked (GalNAc...) threonine" evidence="2 3">
    <location>
        <position position="72"/>
    </location>
</feature>
<feature type="sequence variant">
    <original>I</original>
    <variation>L</variation>
    <location>
        <position position="9"/>
    </location>
</feature>
<feature type="sequence variant">
    <original>P</original>
    <variation>T</variation>
    <location>
        <position position="35"/>
    </location>
</feature>
<evidence type="ECO:0000269" key="1">
    <source>
    </source>
</evidence>
<evidence type="ECO:0000269" key="2">
    <source>
    </source>
</evidence>
<evidence type="ECO:0000269" key="3">
    <source>
    </source>
</evidence>
<evidence type="ECO:0000305" key="4"/>
<organism>
    <name type="scientific">Protophormia terraenovae</name>
    <name type="common">Northern blowfly</name>
    <name type="synonym">Lucilia terraenovae</name>
    <dbReference type="NCBI Taxonomy" id="34676"/>
    <lineage>
        <taxon>Eukaryota</taxon>
        <taxon>Metazoa</taxon>
        <taxon>Ecdysozoa</taxon>
        <taxon>Arthropoda</taxon>
        <taxon>Hexapoda</taxon>
        <taxon>Insecta</taxon>
        <taxon>Pterygota</taxon>
        <taxon>Neoptera</taxon>
        <taxon>Endopterygota</taxon>
        <taxon>Diptera</taxon>
        <taxon>Brachycera</taxon>
        <taxon>Muscomorpha</taxon>
        <taxon>Oestroidea</taxon>
        <taxon>Calliphoridae</taxon>
        <taxon>Chrysomyinae</taxon>
        <taxon>Protophormia</taxon>
    </lineage>
</organism>
<comment type="function">
    <text>Has activity against E.coli.</text>
</comment>
<comment type="induction">
    <text evidence="1">By bacterial infection.</text>
</comment>
<comment type="miscellaneous">
    <text>There seems to be a family of diptericin in protophormia. Diptericin A is the predominant member.</text>
</comment>
<comment type="similarity">
    <text evidence="4">Belongs to the attacin/sarcotoxin-2 family.</text>
</comment>
<name>DIPD_PROTE</name>
<accession>P18684</accession>
<dbReference type="EMBL" id="X15851">
    <property type="protein sequence ID" value="CAB57822.1"/>
    <property type="molecule type" value="mRNA"/>
</dbReference>
<dbReference type="PIR" id="S04634">
    <property type="entry name" value="S04634"/>
</dbReference>
<dbReference type="GlyConnect" id="121">
    <property type="glycosylation" value="3 O-Linked glycans (2 sites)"/>
</dbReference>
<dbReference type="GO" id="GO:0042742">
    <property type="term" value="P:defense response to bacterium"/>
    <property type="evidence" value="ECO:0007669"/>
    <property type="project" value="UniProtKB-KW"/>
</dbReference>
<dbReference type="GO" id="GO:0045087">
    <property type="term" value="P:innate immune response"/>
    <property type="evidence" value="ECO:0007669"/>
    <property type="project" value="UniProtKB-KW"/>
</dbReference>
<proteinExistence type="evidence at protein level"/>
<reference key="1">
    <citation type="journal article" date="1989" name="Eur. J. Biochem.">
        <title>Insect immunity. Isolation of cDNA clones corresponding to diptericin, an inducible antibacterial peptide from Phormia terranovae (Diptera). Transcriptional profiles during immunization.</title>
        <authorList>
            <person name="Reichhart J.-M."/>
            <person name="Essrich M."/>
            <person name="Dimarcq J.-L."/>
            <person name="Hoffmann D."/>
            <person name="Hoffmann J.A."/>
            <person name="Lagueux M."/>
        </authorList>
    </citation>
    <scope>NUCLEOTIDE SEQUENCE [MRNA]</scope>
    <scope>INDUCTION</scope>
    <source>
        <tissue>Larval fat body</tissue>
    </source>
</reference>
<reference key="2">
    <citation type="journal article" date="1995" name="Biochemistry">
        <title>Insect immunity. The inducible antibacterial peptide diptericin carries two O-glycans necessary for biological activity.</title>
        <authorList>
            <person name="Bulet P."/>
            <person name="Hegy G."/>
            <person name="Lambert J."/>
            <person name="van Dorsselaer A."/>
            <person name="Hoffmann J.A."/>
            <person name="Hetru C."/>
        </authorList>
    </citation>
    <scope>PROTEIN SEQUENCE OF 19-100</scope>
    <scope>GLYCOSYLATION AT THR-28 AND THR-72</scope>
    <scope>AMIDATION AT PHE-100</scope>
</reference>
<reference key="3">
    <citation type="journal article" date="1997" name="Anal. Biochem.">
        <title>A matrix-assisted laser desorption ionization time-of-flight mass spectrometry approach to identify the origin of the glycan heterogeneity of diptericin, an O-glycosylated antibacterial peptide from insects.</title>
        <authorList>
            <person name="Uttenweiler-Joseph S."/>
            <person name="Moniatte M."/>
            <person name="Lambert J."/>
            <person name="van Dorsselaer A."/>
            <person name="Bulet P."/>
        </authorList>
    </citation>
    <scope>GLYCOSYLATION AT THR-28 AND THR-72</scope>
</reference>
<keyword id="KW-0027">Amidation</keyword>
<keyword id="KW-0044">Antibiotic</keyword>
<keyword id="KW-0929">Antimicrobial</keyword>
<keyword id="KW-0903">Direct protein sequencing</keyword>
<keyword id="KW-0325">Glycoprotein</keyword>
<keyword id="KW-0391">Immunity</keyword>
<keyword id="KW-0399">Innate immunity</keyword>
<keyword id="KW-0732">Signal</keyword>
<protein>
    <recommendedName>
        <fullName>Diptericin-D</fullName>
    </recommendedName>
</protein>